<feature type="chain" id="PRO_1000010128" description="Ribosomal RNA small subunit methyltransferase G">
    <location>
        <begin position="1"/>
        <end position="213"/>
    </location>
</feature>
<feature type="binding site" evidence="1">
    <location>
        <position position="75"/>
    </location>
    <ligand>
        <name>S-adenosyl-L-methionine</name>
        <dbReference type="ChEBI" id="CHEBI:59789"/>
    </ligand>
</feature>
<feature type="binding site" evidence="1">
    <location>
        <position position="80"/>
    </location>
    <ligand>
        <name>S-adenosyl-L-methionine</name>
        <dbReference type="ChEBI" id="CHEBI:59789"/>
    </ligand>
</feature>
<feature type="binding site" evidence="1">
    <location>
        <begin position="128"/>
        <end position="129"/>
    </location>
    <ligand>
        <name>S-adenosyl-L-methionine</name>
        <dbReference type="ChEBI" id="CHEBI:59789"/>
    </ligand>
</feature>
<feature type="binding site" evidence="1">
    <location>
        <position position="144"/>
    </location>
    <ligand>
        <name>S-adenosyl-L-methionine</name>
        <dbReference type="ChEBI" id="CHEBI:59789"/>
    </ligand>
</feature>
<gene>
    <name evidence="1" type="primary">rsmG</name>
    <name type="ordered locus">BOV_1980</name>
</gene>
<protein>
    <recommendedName>
        <fullName evidence="1">Ribosomal RNA small subunit methyltransferase G</fullName>
        <ecNumber evidence="1">2.1.1.170</ecNumber>
    </recommendedName>
    <alternativeName>
        <fullName evidence="1">16S rRNA 7-methylguanosine methyltransferase</fullName>
        <shortName evidence="1">16S rRNA m7G methyltransferase</shortName>
    </alternativeName>
</protein>
<comment type="function">
    <text evidence="1">Specifically methylates the N7 position of guanine in position 527 of 16S rRNA.</text>
</comment>
<comment type="catalytic activity">
    <reaction evidence="1">
        <text>guanosine(527) in 16S rRNA + S-adenosyl-L-methionine = N(7)-methylguanosine(527) in 16S rRNA + S-adenosyl-L-homocysteine</text>
        <dbReference type="Rhea" id="RHEA:42732"/>
        <dbReference type="Rhea" id="RHEA-COMP:10209"/>
        <dbReference type="Rhea" id="RHEA-COMP:10210"/>
        <dbReference type="ChEBI" id="CHEBI:57856"/>
        <dbReference type="ChEBI" id="CHEBI:59789"/>
        <dbReference type="ChEBI" id="CHEBI:74269"/>
        <dbReference type="ChEBI" id="CHEBI:74480"/>
        <dbReference type="EC" id="2.1.1.170"/>
    </reaction>
</comment>
<comment type="subcellular location">
    <subcellularLocation>
        <location evidence="1">Cytoplasm</location>
    </subcellularLocation>
</comment>
<comment type="similarity">
    <text evidence="1">Belongs to the methyltransferase superfamily. RNA methyltransferase RsmG family.</text>
</comment>
<keyword id="KW-0963">Cytoplasm</keyword>
<keyword id="KW-0489">Methyltransferase</keyword>
<keyword id="KW-0698">rRNA processing</keyword>
<keyword id="KW-0949">S-adenosyl-L-methionine</keyword>
<keyword id="KW-0808">Transferase</keyword>
<dbReference type="EC" id="2.1.1.170" evidence="1"/>
<dbReference type="EMBL" id="CP000708">
    <property type="protein sequence ID" value="ABQ60835.1"/>
    <property type="molecule type" value="Genomic_DNA"/>
</dbReference>
<dbReference type="RefSeq" id="WP_006014439.1">
    <property type="nucleotide sequence ID" value="NC_009505.1"/>
</dbReference>
<dbReference type="SMR" id="A5VT18"/>
<dbReference type="GeneID" id="45125314"/>
<dbReference type="KEGG" id="bov:BOV_1980"/>
<dbReference type="HOGENOM" id="CLU_065341_1_1_5"/>
<dbReference type="PhylomeDB" id="A5VT18"/>
<dbReference type="Proteomes" id="UP000006383">
    <property type="component" value="Chromosome I"/>
</dbReference>
<dbReference type="GO" id="GO:0005829">
    <property type="term" value="C:cytosol"/>
    <property type="evidence" value="ECO:0007669"/>
    <property type="project" value="TreeGrafter"/>
</dbReference>
<dbReference type="GO" id="GO:0070043">
    <property type="term" value="F:rRNA (guanine-N7-)-methyltransferase activity"/>
    <property type="evidence" value="ECO:0007669"/>
    <property type="project" value="UniProtKB-UniRule"/>
</dbReference>
<dbReference type="Gene3D" id="3.40.50.150">
    <property type="entry name" value="Vaccinia Virus protein VP39"/>
    <property type="match status" value="1"/>
</dbReference>
<dbReference type="HAMAP" id="MF_00074">
    <property type="entry name" value="16SrRNA_methyltr_G"/>
    <property type="match status" value="1"/>
</dbReference>
<dbReference type="InterPro" id="IPR003682">
    <property type="entry name" value="rRNA_ssu_MeTfrase_G"/>
</dbReference>
<dbReference type="InterPro" id="IPR029063">
    <property type="entry name" value="SAM-dependent_MTases_sf"/>
</dbReference>
<dbReference type="NCBIfam" id="TIGR00138">
    <property type="entry name" value="rsmG_gidB"/>
    <property type="match status" value="1"/>
</dbReference>
<dbReference type="PANTHER" id="PTHR31760">
    <property type="entry name" value="S-ADENOSYL-L-METHIONINE-DEPENDENT METHYLTRANSFERASES SUPERFAMILY PROTEIN"/>
    <property type="match status" value="1"/>
</dbReference>
<dbReference type="PANTHER" id="PTHR31760:SF0">
    <property type="entry name" value="S-ADENOSYL-L-METHIONINE-DEPENDENT METHYLTRANSFERASES SUPERFAMILY PROTEIN"/>
    <property type="match status" value="1"/>
</dbReference>
<dbReference type="Pfam" id="PF02527">
    <property type="entry name" value="GidB"/>
    <property type="match status" value="1"/>
</dbReference>
<dbReference type="PIRSF" id="PIRSF003078">
    <property type="entry name" value="GidB"/>
    <property type="match status" value="1"/>
</dbReference>
<dbReference type="SUPFAM" id="SSF53335">
    <property type="entry name" value="S-adenosyl-L-methionine-dependent methyltransferases"/>
    <property type="match status" value="1"/>
</dbReference>
<evidence type="ECO:0000255" key="1">
    <source>
        <dbReference type="HAMAP-Rule" id="MF_00074"/>
    </source>
</evidence>
<name>RSMG_BRUO2</name>
<accession>A5VT18</accession>
<organism>
    <name type="scientific">Brucella ovis (strain ATCC 25840 / 63/290 / NCTC 10512)</name>
    <dbReference type="NCBI Taxonomy" id="444178"/>
    <lineage>
        <taxon>Bacteria</taxon>
        <taxon>Pseudomonadati</taxon>
        <taxon>Pseudomonadota</taxon>
        <taxon>Alphaproteobacteria</taxon>
        <taxon>Hyphomicrobiales</taxon>
        <taxon>Brucellaceae</taxon>
        <taxon>Brucella/Ochrobactrum group</taxon>
        <taxon>Brucella</taxon>
    </lineage>
</organism>
<sequence>MSADIRFDSLKTIVPAVSRETADRLIAFEDLFRKWSKAINLASPSTLADLWNRHILDSVQLFPLAKEATRWLDIGSGGGFPGIVTACFLAERSGGCIDLVESAGKKAAFLRTAAGHLHVPARVHSARIESMWEKIETPQVVTARALASLGDLFTLAEPWLSDGAKALFQKGRDYQREIDESRVGWSFDLVKHPSAIDQASVILEISNLRRKTD</sequence>
<reference key="1">
    <citation type="journal article" date="2009" name="PLoS ONE">
        <title>Genome degradation in Brucella ovis corresponds with narrowing of its host range and tissue tropism.</title>
        <authorList>
            <person name="Tsolis R.M."/>
            <person name="Seshadri R."/>
            <person name="Santos R.L."/>
            <person name="Sangari F.J."/>
            <person name="Lobo J.M."/>
            <person name="de Jong M.F."/>
            <person name="Ren Q."/>
            <person name="Myers G."/>
            <person name="Brinkac L.M."/>
            <person name="Nelson W.C."/>
            <person name="Deboy R.T."/>
            <person name="Angiuoli S."/>
            <person name="Khouri H."/>
            <person name="Dimitrov G."/>
            <person name="Robinson J.R."/>
            <person name="Mulligan S."/>
            <person name="Walker R.L."/>
            <person name="Elzer P.E."/>
            <person name="Hassan K.A."/>
            <person name="Paulsen I.T."/>
        </authorList>
    </citation>
    <scope>NUCLEOTIDE SEQUENCE [LARGE SCALE GENOMIC DNA]</scope>
    <source>
        <strain>ATCC 25840 / 63/290 / NCTC 10512</strain>
    </source>
</reference>
<proteinExistence type="inferred from homology"/>